<organism>
    <name type="scientific">Capsella bursa-pastoris</name>
    <name type="common">Shepherd's purse</name>
    <name type="synonym">Thlaspi bursa-pastoris</name>
    <dbReference type="NCBI Taxonomy" id="3719"/>
    <lineage>
        <taxon>Eukaryota</taxon>
        <taxon>Viridiplantae</taxon>
        <taxon>Streptophyta</taxon>
        <taxon>Embryophyta</taxon>
        <taxon>Tracheophyta</taxon>
        <taxon>Spermatophyta</taxon>
        <taxon>Magnoliopsida</taxon>
        <taxon>eudicotyledons</taxon>
        <taxon>Gunneridae</taxon>
        <taxon>Pentapetalae</taxon>
        <taxon>rosids</taxon>
        <taxon>malvids</taxon>
        <taxon>Brassicales</taxon>
        <taxon>Brassicaceae</taxon>
        <taxon>Camelineae</taxon>
        <taxon>Capsella</taxon>
    </lineage>
</organism>
<geneLocation type="chloroplast"/>
<evidence type="ECO:0000255" key="1">
    <source>
        <dbReference type="HAMAP-Rule" id="MF_00482"/>
    </source>
</evidence>
<reference key="1">
    <citation type="submission" date="2007-03" db="EMBL/GenBank/DDBJ databases">
        <title>Sequencing analysis of Capsella bursa-pastoris JO22 chloroplast DNA.</title>
        <authorList>
            <person name="Hosouchi T."/>
            <person name="Tsuruoka H."/>
            <person name="Kotani H."/>
        </authorList>
    </citation>
    <scope>NUCLEOTIDE SEQUENCE [LARGE SCALE GENOMIC DNA]</scope>
</reference>
<accession>A4QKJ1</accession>
<keyword id="KW-0004">4Fe-4S</keyword>
<keyword id="KW-0148">Chlorophyll</keyword>
<keyword id="KW-0150">Chloroplast</keyword>
<keyword id="KW-0157">Chromophore</keyword>
<keyword id="KW-0249">Electron transport</keyword>
<keyword id="KW-0408">Iron</keyword>
<keyword id="KW-0411">Iron-sulfur</keyword>
<keyword id="KW-0460">Magnesium</keyword>
<keyword id="KW-0472">Membrane</keyword>
<keyword id="KW-0479">Metal-binding</keyword>
<keyword id="KW-0560">Oxidoreductase</keyword>
<keyword id="KW-0602">Photosynthesis</keyword>
<keyword id="KW-0603">Photosystem I</keyword>
<keyword id="KW-0934">Plastid</keyword>
<keyword id="KW-0793">Thylakoid</keyword>
<keyword id="KW-0812">Transmembrane</keyword>
<keyword id="KW-1133">Transmembrane helix</keyword>
<keyword id="KW-0813">Transport</keyword>
<comment type="function">
    <text evidence="1">PsaA and PsaB bind P700, the primary electron donor of photosystem I (PSI), as well as the electron acceptors A0, A1 and FX. PSI is a plastocyanin-ferredoxin oxidoreductase, converting photonic excitation into a charge separation, which transfers an electron from the donor P700 chlorophyll pair to the spectroscopically characterized acceptors A0, A1, FX, FA and FB in turn. Oxidized P700 is reduced on the lumenal side of the thylakoid membrane by plastocyanin.</text>
</comment>
<comment type="catalytic activity">
    <reaction evidence="1">
        <text>reduced [plastocyanin] + hnu + oxidized [2Fe-2S]-[ferredoxin] = oxidized [plastocyanin] + reduced [2Fe-2S]-[ferredoxin]</text>
        <dbReference type="Rhea" id="RHEA:30407"/>
        <dbReference type="Rhea" id="RHEA-COMP:10000"/>
        <dbReference type="Rhea" id="RHEA-COMP:10001"/>
        <dbReference type="Rhea" id="RHEA-COMP:10039"/>
        <dbReference type="Rhea" id="RHEA-COMP:10040"/>
        <dbReference type="ChEBI" id="CHEBI:29036"/>
        <dbReference type="ChEBI" id="CHEBI:30212"/>
        <dbReference type="ChEBI" id="CHEBI:33737"/>
        <dbReference type="ChEBI" id="CHEBI:33738"/>
        <dbReference type="ChEBI" id="CHEBI:49552"/>
        <dbReference type="EC" id="1.97.1.12"/>
    </reaction>
</comment>
<comment type="cofactor">
    <text evidence="1">P700 is a chlorophyll a/chlorophyll a' dimer, A0 is one or more chlorophyll a, A1 is one or both phylloquinones and FX is a shared 4Fe-4S iron-sulfur center.</text>
</comment>
<comment type="subunit">
    <text evidence="1">The PsaA/B heterodimer binds the P700 chlorophyll special pair and subsequent electron acceptors. PSI consists of a core antenna complex that captures photons, and an electron transfer chain that converts photonic excitation into a charge separation. The eukaryotic PSI reaction center is composed of at least 11 subunits.</text>
</comment>
<comment type="subcellular location">
    <subcellularLocation>
        <location evidence="1">Plastid</location>
        <location evidence="1">Chloroplast thylakoid membrane</location>
        <topology evidence="1">Multi-pass membrane protein</topology>
    </subcellularLocation>
</comment>
<comment type="similarity">
    <text evidence="1">Belongs to the PsaA/PsaB family.</text>
</comment>
<dbReference type="EC" id="1.97.1.12" evidence="1"/>
<dbReference type="EMBL" id="AP009371">
    <property type="protein sequence ID" value="BAF50196.1"/>
    <property type="molecule type" value="Genomic_DNA"/>
</dbReference>
<dbReference type="RefSeq" id="YP_001123372.1">
    <property type="nucleotide sequence ID" value="NC_009270.1"/>
</dbReference>
<dbReference type="SMR" id="A4QKJ1"/>
<dbReference type="GeneID" id="4961686"/>
<dbReference type="GO" id="GO:0009535">
    <property type="term" value="C:chloroplast thylakoid membrane"/>
    <property type="evidence" value="ECO:0007669"/>
    <property type="project" value="UniProtKB-SubCell"/>
</dbReference>
<dbReference type="GO" id="GO:0009522">
    <property type="term" value="C:photosystem I"/>
    <property type="evidence" value="ECO:0007669"/>
    <property type="project" value="UniProtKB-KW"/>
</dbReference>
<dbReference type="GO" id="GO:0051539">
    <property type="term" value="F:4 iron, 4 sulfur cluster binding"/>
    <property type="evidence" value="ECO:0007669"/>
    <property type="project" value="UniProtKB-KW"/>
</dbReference>
<dbReference type="GO" id="GO:0016168">
    <property type="term" value="F:chlorophyll binding"/>
    <property type="evidence" value="ECO:0007669"/>
    <property type="project" value="UniProtKB-KW"/>
</dbReference>
<dbReference type="GO" id="GO:0009055">
    <property type="term" value="F:electron transfer activity"/>
    <property type="evidence" value="ECO:0007669"/>
    <property type="project" value="UniProtKB-UniRule"/>
</dbReference>
<dbReference type="GO" id="GO:0000287">
    <property type="term" value="F:magnesium ion binding"/>
    <property type="evidence" value="ECO:0007669"/>
    <property type="project" value="UniProtKB-UniRule"/>
</dbReference>
<dbReference type="GO" id="GO:0016491">
    <property type="term" value="F:oxidoreductase activity"/>
    <property type="evidence" value="ECO:0007669"/>
    <property type="project" value="UniProtKB-KW"/>
</dbReference>
<dbReference type="GO" id="GO:0015979">
    <property type="term" value="P:photosynthesis"/>
    <property type="evidence" value="ECO:0007669"/>
    <property type="project" value="UniProtKB-UniRule"/>
</dbReference>
<dbReference type="FunFam" id="1.20.1130.10:FF:000001">
    <property type="entry name" value="Photosystem I P700 chlorophyll a apoprotein A2"/>
    <property type="match status" value="1"/>
</dbReference>
<dbReference type="Gene3D" id="1.20.1130.10">
    <property type="entry name" value="Photosystem I PsaA/PsaB"/>
    <property type="match status" value="1"/>
</dbReference>
<dbReference type="HAMAP" id="MF_00482">
    <property type="entry name" value="PSI_PsaB"/>
    <property type="match status" value="1"/>
</dbReference>
<dbReference type="InterPro" id="IPR001280">
    <property type="entry name" value="PSI_PsaA/B"/>
</dbReference>
<dbReference type="InterPro" id="IPR020586">
    <property type="entry name" value="PSI_PsaA/B_CS"/>
</dbReference>
<dbReference type="InterPro" id="IPR036408">
    <property type="entry name" value="PSI_PsaA/B_sf"/>
</dbReference>
<dbReference type="InterPro" id="IPR006244">
    <property type="entry name" value="PSI_PsaB"/>
</dbReference>
<dbReference type="NCBIfam" id="TIGR01336">
    <property type="entry name" value="psaB"/>
    <property type="match status" value="1"/>
</dbReference>
<dbReference type="PANTHER" id="PTHR30128">
    <property type="entry name" value="OUTER MEMBRANE PROTEIN, OMPA-RELATED"/>
    <property type="match status" value="1"/>
</dbReference>
<dbReference type="PANTHER" id="PTHR30128:SF19">
    <property type="entry name" value="PHOTOSYSTEM I P700 CHLOROPHYLL A APOPROTEIN A1-RELATED"/>
    <property type="match status" value="1"/>
</dbReference>
<dbReference type="Pfam" id="PF00223">
    <property type="entry name" value="PsaA_PsaB"/>
    <property type="match status" value="1"/>
</dbReference>
<dbReference type="PIRSF" id="PIRSF002905">
    <property type="entry name" value="PSI_A"/>
    <property type="match status" value="1"/>
</dbReference>
<dbReference type="PRINTS" id="PR00257">
    <property type="entry name" value="PHOTSYSPSAAB"/>
</dbReference>
<dbReference type="SUPFAM" id="SSF81558">
    <property type="entry name" value="Photosystem I subunits PsaA/PsaB"/>
    <property type="match status" value="1"/>
</dbReference>
<dbReference type="PROSITE" id="PS00419">
    <property type="entry name" value="PHOTOSYSTEM_I_PSAAB"/>
    <property type="match status" value="1"/>
</dbReference>
<proteinExistence type="inferred from homology"/>
<name>PSAB_CAPBU</name>
<sequence length="734" mass="82372">MALRFPRFSQGLAQDPTTRRIWFGIATAHDFESHDDITEERLYQNIFASHFGQLAIIFLWTSGNLFHVAWQGNFETWVQDPLHVRPIAHAIWDPHFGQPAVEAFTRGGALGPVNIAYSGVYQWWYTIGLRTNEDLYTGALFLLFLSALSLIGGWLHLQPKWKPRVSWFKNAESRLNHHLSGLFGVSSLAWTGHLVHVAIPASRGENVRWNNFLNVLPHPQGLGPLFTGQWSLYAQNPDSSSHLFGTSQGSGTAILTLLGGFHPQTQSLWLTDMAHHHLAIAILFLIAGHMYRTNFGIGHSIKDLLEAHIPPGGRLGRGHKGLYDTINNSIHFQLGLALASLGVITSLVAQHMYSLPAYAFIAQDFTTQAALYTHHQYIAGFIMTGAFAHGAIFFIRDYNPEQNEDNVLARMLDHKEAIISHLSWASLFLGFHTLGLYVHNDVMLAFGTPEKQILIEPIFAQWIQSAHGKTSYGFDVLLSSTSGPAFNAGRSIWLPGWLNAINESSNSLFLTIGPGDFLVHHAIALGLHTTTLILVKGALDARGSKLMPDKKDFGYSFPCDGPGRGGTCDISAWDAFYLAVFWMLNTIGWVTFYWHWKHITLWQGNVSQFNESSTYLMGWLRDYLWLNSSQLINGYNPFGMNSLSVWAWMFLFGHLVWATGFMFLISWRGYWQELIETLAWAHERTPLANLIRWKDKPVALSIVQARLVGLAHFSVGYIFTYAAFLIASTSGKFG</sequence>
<protein>
    <recommendedName>
        <fullName evidence="1">Photosystem I P700 chlorophyll a apoprotein A2</fullName>
        <ecNumber evidence="1">1.97.1.12</ecNumber>
    </recommendedName>
    <alternativeName>
        <fullName evidence="1">PSI-B</fullName>
    </alternativeName>
    <alternativeName>
        <fullName evidence="1">PsaB</fullName>
    </alternativeName>
</protein>
<feature type="chain" id="PRO_0000300037" description="Photosystem I P700 chlorophyll a apoprotein A2">
    <location>
        <begin position="1"/>
        <end position="734"/>
    </location>
</feature>
<feature type="transmembrane region" description="Helical; Name=I" evidence="1">
    <location>
        <begin position="46"/>
        <end position="69"/>
    </location>
</feature>
<feature type="transmembrane region" description="Helical; Name=II" evidence="1">
    <location>
        <begin position="135"/>
        <end position="158"/>
    </location>
</feature>
<feature type="transmembrane region" description="Helical; Name=III" evidence="1">
    <location>
        <begin position="175"/>
        <end position="199"/>
    </location>
</feature>
<feature type="transmembrane region" description="Helical; Name=IV" evidence="1">
    <location>
        <begin position="273"/>
        <end position="291"/>
    </location>
</feature>
<feature type="transmembrane region" description="Helical; Name=V" evidence="1">
    <location>
        <begin position="330"/>
        <end position="353"/>
    </location>
</feature>
<feature type="transmembrane region" description="Helical; Name=VI" evidence="1">
    <location>
        <begin position="369"/>
        <end position="395"/>
    </location>
</feature>
<feature type="transmembrane region" description="Helical; Name=VII" evidence="1">
    <location>
        <begin position="417"/>
        <end position="439"/>
    </location>
</feature>
<feature type="transmembrane region" description="Helical; Name=VIII" evidence="1">
    <location>
        <begin position="517"/>
        <end position="535"/>
    </location>
</feature>
<feature type="transmembrane region" description="Helical; Name=IX" evidence="1">
    <location>
        <begin position="575"/>
        <end position="596"/>
    </location>
</feature>
<feature type="transmembrane region" description="Helical; Name=X" evidence="1">
    <location>
        <begin position="643"/>
        <end position="665"/>
    </location>
</feature>
<feature type="transmembrane region" description="Helical; Name=XI" evidence="1">
    <location>
        <begin position="707"/>
        <end position="727"/>
    </location>
</feature>
<feature type="binding site" evidence="1">
    <location>
        <position position="559"/>
    </location>
    <ligand>
        <name>[4Fe-4S] cluster</name>
        <dbReference type="ChEBI" id="CHEBI:49883"/>
        <note>ligand shared between dimeric partners</note>
    </ligand>
</feature>
<feature type="binding site" evidence="1">
    <location>
        <position position="568"/>
    </location>
    <ligand>
        <name>[4Fe-4S] cluster</name>
        <dbReference type="ChEBI" id="CHEBI:49883"/>
        <note>ligand shared between dimeric partners</note>
    </ligand>
</feature>
<feature type="binding site" description="axial binding residue" evidence="1">
    <location>
        <position position="654"/>
    </location>
    <ligand>
        <name>chlorophyll a</name>
        <dbReference type="ChEBI" id="CHEBI:58416"/>
        <label>B1</label>
    </ligand>
    <ligandPart>
        <name>Mg</name>
        <dbReference type="ChEBI" id="CHEBI:25107"/>
    </ligandPart>
</feature>
<feature type="binding site" description="axial binding residue" evidence="1">
    <location>
        <position position="662"/>
    </location>
    <ligand>
        <name>chlorophyll a</name>
        <dbReference type="ChEBI" id="CHEBI:58416"/>
        <label>B3</label>
    </ligand>
    <ligandPart>
        <name>Mg</name>
        <dbReference type="ChEBI" id="CHEBI:25107"/>
    </ligandPart>
</feature>
<feature type="binding site" evidence="1">
    <location>
        <position position="670"/>
    </location>
    <ligand>
        <name>chlorophyll a</name>
        <dbReference type="ChEBI" id="CHEBI:58416"/>
        <label>B3</label>
    </ligand>
</feature>
<feature type="binding site" evidence="1">
    <location>
        <position position="671"/>
    </location>
    <ligand>
        <name>phylloquinone</name>
        <dbReference type="ChEBI" id="CHEBI:18067"/>
        <label>B</label>
    </ligand>
</feature>
<gene>
    <name evidence="1" type="primary">psaB</name>
</gene>